<gene>
    <name evidence="1" type="primary">rnp4</name>
    <name type="ordered locus">Hbut_1593</name>
</gene>
<comment type="function">
    <text evidence="1">Part of ribonuclease P, a protein complex that generates mature tRNA molecules by cleaving their 5'-ends.</text>
</comment>
<comment type="catalytic activity">
    <reaction evidence="1">
        <text>Endonucleolytic cleavage of RNA, removing 5'-extranucleotides from tRNA precursor.</text>
        <dbReference type="EC" id="3.1.26.5"/>
    </reaction>
</comment>
<comment type="cofactor">
    <cofactor evidence="1">
        <name>Zn(2+)</name>
        <dbReference type="ChEBI" id="CHEBI:29105"/>
    </cofactor>
    <text evidence="1">Binds 1 zinc ion per subunit.</text>
</comment>
<comment type="subunit">
    <text evidence="1">Consists of a catalytic RNA component and at least 4-5 protein subunits.</text>
</comment>
<comment type="subcellular location">
    <subcellularLocation>
        <location evidence="1">Cytoplasm</location>
    </subcellularLocation>
</comment>
<comment type="similarity">
    <text evidence="1">Belongs to the eukaryotic/archaeal RNase P protein component 4 family.</text>
</comment>
<protein>
    <recommendedName>
        <fullName evidence="1">Ribonuclease P protein component 4</fullName>
        <shortName evidence="1">RNase P component 4</shortName>
        <ecNumber evidence="1">3.1.26.5</ecNumber>
    </recommendedName>
    <alternativeName>
        <fullName evidence="1">Rpp21</fullName>
    </alternativeName>
</protein>
<evidence type="ECO:0000255" key="1">
    <source>
        <dbReference type="HAMAP-Rule" id="MF_00757"/>
    </source>
</evidence>
<keyword id="KW-0963">Cytoplasm</keyword>
<keyword id="KW-0255">Endonuclease</keyword>
<keyword id="KW-0378">Hydrolase</keyword>
<keyword id="KW-0479">Metal-binding</keyword>
<keyword id="KW-0540">Nuclease</keyword>
<keyword id="KW-1185">Reference proteome</keyword>
<keyword id="KW-0819">tRNA processing</keyword>
<keyword id="KW-0862">Zinc</keyword>
<reference key="1">
    <citation type="journal article" date="2007" name="Archaea">
        <title>The genome of Hyperthermus butylicus: a sulfur-reducing, peptide fermenting, neutrophilic Crenarchaeote growing up to 108 degrees C.</title>
        <authorList>
            <person name="Bruegger K."/>
            <person name="Chen L."/>
            <person name="Stark M."/>
            <person name="Zibat A."/>
            <person name="Redder P."/>
            <person name="Ruepp A."/>
            <person name="Awayez M."/>
            <person name="She Q."/>
            <person name="Garrett R.A."/>
            <person name="Klenk H.-P."/>
        </authorList>
    </citation>
    <scope>NUCLEOTIDE SEQUENCE [LARGE SCALE GENOMIC DNA]</scope>
    <source>
        <strain>DSM 5456 / JCM 9403 / PLM1-5</strain>
    </source>
</reference>
<feature type="chain" id="PRO_1000194593" description="Ribonuclease P protein component 4">
    <location>
        <begin position="1"/>
        <end position="115"/>
    </location>
</feature>
<feature type="binding site" evidence="1">
    <location>
        <position position="66"/>
    </location>
    <ligand>
        <name>Zn(2+)</name>
        <dbReference type="ChEBI" id="CHEBI:29105"/>
    </ligand>
</feature>
<feature type="binding site" evidence="1">
    <location>
        <position position="69"/>
    </location>
    <ligand>
        <name>Zn(2+)</name>
        <dbReference type="ChEBI" id="CHEBI:29105"/>
    </ligand>
</feature>
<feature type="binding site" evidence="1">
    <location>
        <position position="96"/>
    </location>
    <ligand>
        <name>Zn(2+)</name>
        <dbReference type="ChEBI" id="CHEBI:29105"/>
    </ligand>
</feature>
<feature type="binding site" evidence="1">
    <location>
        <position position="99"/>
    </location>
    <ligand>
        <name>Zn(2+)</name>
        <dbReference type="ChEBI" id="CHEBI:29105"/>
    </ligand>
</feature>
<proteinExistence type="inferred from homology"/>
<organism>
    <name type="scientific">Hyperthermus butylicus (strain DSM 5456 / JCM 9403 / PLM1-5)</name>
    <dbReference type="NCBI Taxonomy" id="415426"/>
    <lineage>
        <taxon>Archaea</taxon>
        <taxon>Thermoproteota</taxon>
        <taxon>Thermoprotei</taxon>
        <taxon>Desulfurococcales</taxon>
        <taxon>Pyrodictiaceae</taxon>
        <taxon>Hyperthermus</taxon>
    </lineage>
</organism>
<accession>A2BN51</accession>
<name>RNP4_HYPBU</name>
<dbReference type="EC" id="3.1.26.5" evidence="1"/>
<dbReference type="EMBL" id="CP000493">
    <property type="protein sequence ID" value="ABM81412.1"/>
    <property type="molecule type" value="Genomic_DNA"/>
</dbReference>
<dbReference type="RefSeq" id="WP_011822730.1">
    <property type="nucleotide sequence ID" value="NC_008818.1"/>
</dbReference>
<dbReference type="SMR" id="A2BN51"/>
<dbReference type="STRING" id="415426.Hbut_1593"/>
<dbReference type="EnsemblBacteria" id="ABM81412">
    <property type="protein sequence ID" value="ABM81412"/>
    <property type="gene ID" value="Hbut_1593"/>
</dbReference>
<dbReference type="GeneID" id="4781977"/>
<dbReference type="KEGG" id="hbu:Hbut_1593"/>
<dbReference type="eggNOG" id="arCOG04345">
    <property type="taxonomic scope" value="Archaea"/>
</dbReference>
<dbReference type="HOGENOM" id="CLU_079140_3_1_2"/>
<dbReference type="OrthoDB" id="10058at2157"/>
<dbReference type="Proteomes" id="UP000002593">
    <property type="component" value="Chromosome"/>
</dbReference>
<dbReference type="GO" id="GO:0005737">
    <property type="term" value="C:cytoplasm"/>
    <property type="evidence" value="ECO:0007669"/>
    <property type="project" value="UniProtKB-SubCell"/>
</dbReference>
<dbReference type="GO" id="GO:0030677">
    <property type="term" value="C:ribonuclease P complex"/>
    <property type="evidence" value="ECO:0007669"/>
    <property type="project" value="UniProtKB-UniRule"/>
</dbReference>
<dbReference type="GO" id="GO:0004526">
    <property type="term" value="F:ribonuclease P activity"/>
    <property type="evidence" value="ECO:0007669"/>
    <property type="project" value="UniProtKB-UniRule"/>
</dbReference>
<dbReference type="GO" id="GO:0008270">
    <property type="term" value="F:zinc ion binding"/>
    <property type="evidence" value="ECO:0007669"/>
    <property type="project" value="UniProtKB-UniRule"/>
</dbReference>
<dbReference type="GO" id="GO:0001682">
    <property type="term" value="P:tRNA 5'-leader removal"/>
    <property type="evidence" value="ECO:0007669"/>
    <property type="project" value="UniProtKB-UniRule"/>
</dbReference>
<dbReference type="Gene3D" id="6.20.50.20">
    <property type="match status" value="1"/>
</dbReference>
<dbReference type="HAMAP" id="MF_00757">
    <property type="entry name" value="RNase_P_4"/>
    <property type="match status" value="1"/>
</dbReference>
<dbReference type="InterPro" id="IPR016432">
    <property type="entry name" value="RNP4"/>
</dbReference>
<dbReference type="InterPro" id="IPR007175">
    <property type="entry name" value="Rpr2/Snm1/Rpp21"/>
</dbReference>
<dbReference type="PANTHER" id="PTHR14742:SF0">
    <property type="entry name" value="RIBONUCLEASE P PROTEIN SUBUNIT P21"/>
    <property type="match status" value="1"/>
</dbReference>
<dbReference type="PANTHER" id="PTHR14742">
    <property type="entry name" value="RIBONUCLEASE P SUBUNIT P21"/>
    <property type="match status" value="1"/>
</dbReference>
<dbReference type="Pfam" id="PF04032">
    <property type="entry name" value="Rpr2"/>
    <property type="match status" value="1"/>
</dbReference>
<dbReference type="PIRSF" id="PIRSF004878">
    <property type="entry name" value="RNase_P_4"/>
    <property type="match status" value="1"/>
</dbReference>
<sequence length="115" mass="13132">MSGSKAKSRELARDVALQAIRTLYLAAVDAVRRGDYELARRLVAEADETRRVMRLRKPRFLRRGVCRNCSLPLVPGVTARYRLVRDGSVTRLVVTCLACGYIHRHVLVQRRRGSR</sequence>